<evidence type="ECO:0000255" key="1">
    <source>
        <dbReference type="HAMAP-Rule" id="MF_00151"/>
    </source>
</evidence>
<protein>
    <recommendedName>
        <fullName evidence="1">Phosphopantetheine adenylyltransferase</fullName>
        <ecNumber evidence="1">2.7.7.3</ecNumber>
    </recommendedName>
    <alternativeName>
        <fullName evidence="1">Dephospho-CoA pyrophosphorylase</fullName>
    </alternativeName>
    <alternativeName>
        <fullName evidence="1">Pantetheine-phosphate adenylyltransferase</fullName>
        <shortName evidence="1">PPAT</shortName>
    </alternativeName>
</protein>
<dbReference type="EC" id="2.7.7.3" evidence="1"/>
<dbReference type="EMBL" id="CP000854">
    <property type="protein sequence ID" value="ACC40200.1"/>
    <property type="molecule type" value="Genomic_DNA"/>
</dbReference>
<dbReference type="RefSeq" id="WP_011740055.1">
    <property type="nucleotide sequence ID" value="NC_010612.1"/>
</dbReference>
<dbReference type="SMR" id="B2HIK6"/>
<dbReference type="STRING" id="216594.MMAR_1751"/>
<dbReference type="GeneID" id="93436328"/>
<dbReference type="KEGG" id="mmi:MMAR_1751"/>
<dbReference type="eggNOG" id="COG0669">
    <property type="taxonomic scope" value="Bacteria"/>
</dbReference>
<dbReference type="HOGENOM" id="CLU_100149_1_0_11"/>
<dbReference type="OrthoDB" id="9806661at2"/>
<dbReference type="UniPathway" id="UPA00241">
    <property type="reaction ID" value="UER00355"/>
</dbReference>
<dbReference type="Proteomes" id="UP000001190">
    <property type="component" value="Chromosome"/>
</dbReference>
<dbReference type="GO" id="GO:0005737">
    <property type="term" value="C:cytoplasm"/>
    <property type="evidence" value="ECO:0007669"/>
    <property type="project" value="UniProtKB-SubCell"/>
</dbReference>
<dbReference type="GO" id="GO:0005524">
    <property type="term" value="F:ATP binding"/>
    <property type="evidence" value="ECO:0007669"/>
    <property type="project" value="UniProtKB-KW"/>
</dbReference>
<dbReference type="GO" id="GO:0004595">
    <property type="term" value="F:pantetheine-phosphate adenylyltransferase activity"/>
    <property type="evidence" value="ECO:0007669"/>
    <property type="project" value="UniProtKB-UniRule"/>
</dbReference>
<dbReference type="GO" id="GO:0015937">
    <property type="term" value="P:coenzyme A biosynthetic process"/>
    <property type="evidence" value="ECO:0007669"/>
    <property type="project" value="UniProtKB-UniRule"/>
</dbReference>
<dbReference type="CDD" id="cd02163">
    <property type="entry name" value="PPAT"/>
    <property type="match status" value="1"/>
</dbReference>
<dbReference type="FunFam" id="3.40.50.620:FF:000012">
    <property type="entry name" value="Phosphopantetheine adenylyltransferase"/>
    <property type="match status" value="1"/>
</dbReference>
<dbReference type="Gene3D" id="3.40.50.620">
    <property type="entry name" value="HUPs"/>
    <property type="match status" value="1"/>
</dbReference>
<dbReference type="HAMAP" id="MF_00151">
    <property type="entry name" value="PPAT_bact"/>
    <property type="match status" value="1"/>
</dbReference>
<dbReference type="InterPro" id="IPR004821">
    <property type="entry name" value="Cyt_trans-like"/>
</dbReference>
<dbReference type="InterPro" id="IPR001980">
    <property type="entry name" value="PPAT"/>
</dbReference>
<dbReference type="InterPro" id="IPR014729">
    <property type="entry name" value="Rossmann-like_a/b/a_fold"/>
</dbReference>
<dbReference type="NCBIfam" id="TIGR01510">
    <property type="entry name" value="coaD_prev_kdtB"/>
    <property type="match status" value="1"/>
</dbReference>
<dbReference type="NCBIfam" id="TIGR00125">
    <property type="entry name" value="cyt_tran_rel"/>
    <property type="match status" value="1"/>
</dbReference>
<dbReference type="PANTHER" id="PTHR21342">
    <property type="entry name" value="PHOSPHOPANTETHEINE ADENYLYLTRANSFERASE"/>
    <property type="match status" value="1"/>
</dbReference>
<dbReference type="PANTHER" id="PTHR21342:SF1">
    <property type="entry name" value="PHOSPHOPANTETHEINE ADENYLYLTRANSFERASE"/>
    <property type="match status" value="1"/>
</dbReference>
<dbReference type="Pfam" id="PF01467">
    <property type="entry name" value="CTP_transf_like"/>
    <property type="match status" value="1"/>
</dbReference>
<dbReference type="PRINTS" id="PR01020">
    <property type="entry name" value="LPSBIOSNTHSS"/>
</dbReference>
<dbReference type="SUPFAM" id="SSF52374">
    <property type="entry name" value="Nucleotidylyl transferase"/>
    <property type="match status" value="1"/>
</dbReference>
<feature type="chain" id="PRO_1000096816" description="Phosphopantetheine adenylyltransferase">
    <location>
        <begin position="1"/>
        <end position="157"/>
    </location>
</feature>
<feature type="binding site" evidence="1">
    <location>
        <begin position="9"/>
        <end position="10"/>
    </location>
    <ligand>
        <name>ATP</name>
        <dbReference type="ChEBI" id="CHEBI:30616"/>
    </ligand>
</feature>
<feature type="binding site" evidence="1">
    <location>
        <position position="9"/>
    </location>
    <ligand>
        <name>substrate</name>
    </ligand>
</feature>
<feature type="binding site" evidence="1">
    <location>
        <position position="17"/>
    </location>
    <ligand>
        <name>ATP</name>
        <dbReference type="ChEBI" id="CHEBI:30616"/>
    </ligand>
</feature>
<feature type="binding site" evidence="1">
    <location>
        <position position="41"/>
    </location>
    <ligand>
        <name>substrate</name>
    </ligand>
</feature>
<feature type="binding site" evidence="1">
    <location>
        <position position="73"/>
    </location>
    <ligand>
        <name>substrate</name>
    </ligand>
</feature>
<feature type="binding site" evidence="1">
    <location>
        <position position="87"/>
    </location>
    <ligand>
        <name>substrate</name>
    </ligand>
</feature>
<feature type="binding site" evidence="1">
    <location>
        <begin position="88"/>
        <end position="90"/>
    </location>
    <ligand>
        <name>ATP</name>
        <dbReference type="ChEBI" id="CHEBI:30616"/>
    </ligand>
</feature>
<feature type="binding site" evidence="1">
    <location>
        <position position="98"/>
    </location>
    <ligand>
        <name>ATP</name>
        <dbReference type="ChEBI" id="CHEBI:30616"/>
    </ligand>
</feature>
<feature type="binding site" evidence="1">
    <location>
        <begin position="122"/>
        <end position="128"/>
    </location>
    <ligand>
        <name>ATP</name>
        <dbReference type="ChEBI" id="CHEBI:30616"/>
    </ligand>
</feature>
<feature type="site" description="Transition state stabilizer" evidence="1">
    <location>
        <position position="17"/>
    </location>
</feature>
<comment type="function">
    <text evidence="1">Reversibly transfers an adenylyl group from ATP to 4'-phosphopantetheine, yielding dephospho-CoA (dPCoA) and pyrophosphate.</text>
</comment>
<comment type="catalytic activity">
    <reaction evidence="1">
        <text>(R)-4'-phosphopantetheine + ATP + H(+) = 3'-dephospho-CoA + diphosphate</text>
        <dbReference type="Rhea" id="RHEA:19801"/>
        <dbReference type="ChEBI" id="CHEBI:15378"/>
        <dbReference type="ChEBI" id="CHEBI:30616"/>
        <dbReference type="ChEBI" id="CHEBI:33019"/>
        <dbReference type="ChEBI" id="CHEBI:57328"/>
        <dbReference type="ChEBI" id="CHEBI:61723"/>
        <dbReference type="EC" id="2.7.7.3"/>
    </reaction>
</comment>
<comment type="cofactor">
    <cofactor evidence="1">
        <name>Mg(2+)</name>
        <dbReference type="ChEBI" id="CHEBI:18420"/>
    </cofactor>
</comment>
<comment type="pathway">
    <text evidence="1">Cofactor biosynthesis; coenzyme A biosynthesis; CoA from (R)-pantothenate: step 4/5.</text>
</comment>
<comment type="subunit">
    <text evidence="1">Homohexamer.</text>
</comment>
<comment type="subcellular location">
    <subcellularLocation>
        <location evidence="1">Cytoplasm</location>
    </subcellularLocation>
</comment>
<comment type="similarity">
    <text evidence="1">Belongs to the bacterial CoaD family.</text>
</comment>
<accession>B2HIK6</accession>
<proteinExistence type="inferred from homology"/>
<gene>
    <name evidence="1" type="primary">coaD</name>
    <name type="ordered locus">MMAR_1751</name>
</gene>
<name>COAD_MYCMM</name>
<organism>
    <name type="scientific">Mycobacterium marinum (strain ATCC BAA-535 / M)</name>
    <dbReference type="NCBI Taxonomy" id="216594"/>
    <lineage>
        <taxon>Bacteria</taxon>
        <taxon>Bacillati</taxon>
        <taxon>Actinomycetota</taxon>
        <taxon>Actinomycetes</taxon>
        <taxon>Mycobacteriales</taxon>
        <taxon>Mycobacteriaceae</taxon>
        <taxon>Mycobacterium</taxon>
        <taxon>Mycobacterium ulcerans group</taxon>
    </lineage>
</organism>
<reference key="1">
    <citation type="journal article" date="2008" name="Genome Res.">
        <title>Insights from the complete genome sequence of Mycobacterium marinum on the evolution of Mycobacterium tuberculosis.</title>
        <authorList>
            <person name="Stinear T.P."/>
            <person name="Seemann T."/>
            <person name="Harrison P.F."/>
            <person name="Jenkin G.A."/>
            <person name="Davies J.K."/>
            <person name="Johnson P.D."/>
            <person name="Abdellah Z."/>
            <person name="Arrowsmith C."/>
            <person name="Chillingworth T."/>
            <person name="Churcher C."/>
            <person name="Clarke K."/>
            <person name="Cronin A."/>
            <person name="Davis P."/>
            <person name="Goodhead I."/>
            <person name="Holroyd N."/>
            <person name="Jagels K."/>
            <person name="Lord A."/>
            <person name="Moule S."/>
            <person name="Mungall K."/>
            <person name="Norbertczak H."/>
            <person name="Quail M.A."/>
            <person name="Rabbinowitsch E."/>
            <person name="Walker D."/>
            <person name="White B."/>
            <person name="Whitehead S."/>
            <person name="Small P.L."/>
            <person name="Brosch R."/>
            <person name="Ramakrishnan L."/>
            <person name="Fischbach M.A."/>
            <person name="Parkhill J."/>
            <person name="Cole S.T."/>
        </authorList>
    </citation>
    <scope>NUCLEOTIDE SEQUENCE [LARGE SCALE GENOMIC DNA]</scope>
    <source>
        <strain>ATCC BAA-535 / M</strain>
    </source>
</reference>
<keyword id="KW-0067">ATP-binding</keyword>
<keyword id="KW-0173">Coenzyme A biosynthesis</keyword>
<keyword id="KW-0963">Cytoplasm</keyword>
<keyword id="KW-0460">Magnesium</keyword>
<keyword id="KW-0547">Nucleotide-binding</keyword>
<keyword id="KW-0548">Nucleotidyltransferase</keyword>
<keyword id="KW-1185">Reference proteome</keyword>
<keyword id="KW-0808">Transferase</keyword>
<sequence length="157" mass="17113">MTGAVCPGSFDPVTLGHVDVFERAAAQFDEVVVAILVNPAKKGMFDLDERIAMIEESTAHLPNLRVEAGQGLVVDFVKAQGMNAIVKGLRTGTDFEYELQMAQMNKHIAGVDTFFVATAPRYSFVSSSLAKEVAMLGGDVSELLPEPVNRRLRERTK</sequence>